<sequence length="141" mass="15005">MEPLHKDAETAAAAAAVAAADPRGASSSSGVVVQVREKKGPLRAAIPYMPFPVAVICLFLNTFVPGLGTFVSAFTVLCGARTDLPDRHVCCVFWLNIAAALIQVLTAIVMVGWIMSIFWGMDMVILAISQGYKDQGIPQQL</sequence>
<feature type="chain" id="PRO_0000278636" description="Protein stum homolog">
    <location>
        <begin position="1"/>
        <end position="141"/>
    </location>
</feature>
<feature type="transmembrane region" description="Helical" evidence="1">
    <location>
        <begin position="51"/>
        <end position="71"/>
    </location>
</feature>
<feature type="transmembrane region" description="Helical" evidence="1">
    <location>
        <begin position="87"/>
        <end position="107"/>
    </location>
</feature>
<feature type="modified residue" description="Phosphoserine" evidence="5">
    <location>
        <position position="26"/>
    </location>
</feature>
<evidence type="ECO:0000255" key="1"/>
<evidence type="ECO:0000303" key="2">
    <source>
    </source>
</evidence>
<evidence type="ECO:0000305" key="3"/>
<evidence type="ECO:0000305" key="4">
    <source>
    </source>
</evidence>
<evidence type="ECO:0007744" key="5">
    <source>
    </source>
</evidence>
<proteinExistence type="evidence at protein level"/>
<comment type="subcellular location">
    <subcellularLocation>
        <location evidence="3">Membrane</location>
        <topology evidence="3">Multi-pass membrane protein</topology>
    </subcellularLocation>
</comment>
<comment type="miscellaneous">
    <text evidence="4">Able to rescue the walking impairment phenotype when transfected in mutant flies lacking the stum protein (AC Q9W2E1).</text>
</comment>
<comment type="similarity">
    <text evidence="3">Belongs to the SPEC3 family. Stum subfamily.</text>
</comment>
<dbReference type="EMBL" id="BC120654">
    <property type="protein sequence ID" value="AAI20655.1"/>
    <property type="molecule type" value="mRNA"/>
</dbReference>
<dbReference type="EMBL" id="BC120656">
    <property type="protein sequence ID" value="AAI20657.1"/>
    <property type="molecule type" value="mRNA"/>
</dbReference>
<dbReference type="CCDS" id="CCDS48467.1"/>
<dbReference type="RefSeq" id="NP_001074696.1">
    <property type="nucleotide sequence ID" value="NM_001081227.2"/>
</dbReference>
<dbReference type="BioGRID" id="237870">
    <property type="interactions" value="1"/>
</dbReference>
<dbReference type="FunCoup" id="Q0VBF8">
    <property type="interactions" value="6"/>
</dbReference>
<dbReference type="STRING" id="10090.ENSMUSP00000119782"/>
<dbReference type="iPTMnet" id="Q0VBF8"/>
<dbReference type="PhosphoSitePlus" id="Q0VBF8"/>
<dbReference type="SwissPalm" id="Q0VBF8"/>
<dbReference type="PaxDb" id="10090-ENSMUSP00000119782"/>
<dbReference type="ProteomicsDB" id="254763"/>
<dbReference type="Antibodypedia" id="34651">
    <property type="antibodies" value="103 antibodies from 19 providers"/>
</dbReference>
<dbReference type="Ensembl" id="ENSMUST00000136521.2">
    <property type="protein sequence ID" value="ENSMUSP00000119782.2"/>
    <property type="gene ID" value="ENSMUSG00000053963.8"/>
</dbReference>
<dbReference type="GeneID" id="381310"/>
<dbReference type="KEGG" id="mmu:381310"/>
<dbReference type="UCSC" id="uc007dwh.2">
    <property type="organism name" value="mouse"/>
</dbReference>
<dbReference type="AGR" id="MGI:2138735"/>
<dbReference type="CTD" id="375057"/>
<dbReference type="MGI" id="MGI:2138735">
    <property type="gene designation" value="Stum"/>
</dbReference>
<dbReference type="VEuPathDB" id="HostDB:ENSMUSG00000053963"/>
<dbReference type="eggNOG" id="ENOG502S270">
    <property type="taxonomic scope" value="Eukaryota"/>
</dbReference>
<dbReference type="GeneTree" id="ENSGT00390000008003"/>
<dbReference type="HOGENOM" id="CLU_139845_0_0_1"/>
<dbReference type="InParanoid" id="Q0VBF8"/>
<dbReference type="OrthoDB" id="361532at2759"/>
<dbReference type="PhylomeDB" id="Q0VBF8"/>
<dbReference type="TreeFam" id="TF313260"/>
<dbReference type="BioGRID-ORCS" id="381310">
    <property type="hits" value="3 hits in 77 CRISPR screens"/>
</dbReference>
<dbReference type="CD-CODE" id="CE726F99">
    <property type="entry name" value="Postsynaptic density"/>
</dbReference>
<dbReference type="PRO" id="PR:Q0VBF8"/>
<dbReference type="Proteomes" id="UP000000589">
    <property type="component" value="Chromosome 1"/>
</dbReference>
<dbReference type="RNAct" id="Q0VBF8">
    <property type="molecule type" value="protein"/>
</dbReference>
<dbReference type="Bgee" id="ENSMUSG00000053963">
    <property type="expression patterns" value="Expressed in medial dorsal nucleus of thalamus and 118 other cell types or tissues"/>
</dbReference>
<dbReference type="ExpressionAtlas" id="Q0VBF8">
    <property type="expression patterns" value="baseline and differential"/>
</dbReference>
<dbReference type="GO" id="GO:0016020">
    <property type="term" value="C:membrane"/>
    <property type="evidence" value="ECO:0007669"/>
    <property type="project" value="UniProtKB-SubCell"/>
</dbReference>
<dbReference type="InterPro" id="IPR026673">
    <property type="entry name" value="SPEC3/Stum"/>
</dbReference>
<dbReference type="PANTHER" id="PTHR21676">
    <property type="entry name" value="PROTEIN STUM"/>
    <property type="match status" value="1"/>
</dbReference>
<dbReference type="PANTHER" id="PTHR21676:SF1">
    <property type="entry name" value="PROTEIN STUM HOMOLOG"/>
    <property type="match status" value="1"/>
</dbReference>
<dbReference type="Pfam" id="PF15795">
    <property type="entry name" value="Spec3"/>
    <property type="match status" value="1"/>
</dbReference>
<protein>
    <recommendedName>
        <fullName>Protein stum homolog</fullName>
    </recommendedName>
</protein>
<organism>
    <name type="scientific">Mus musculus</name>
    <name type="common">Mouse</name>
    <dbReference type="NCBI Taxonomy" id="10090"/>
    <lineage>
        <taxon>Eukaryota</taxon>
        <taxon>Metazoa</taxon>
        <taxon>Chordata</taxon>
        <taxon>Craniata</taxon>
        <taxon>Vertebrata</taxon>
        <taxon>Euteleostomi</taxon>
        <taxon>Mammalia</taxon>
        <taxon>Eutheria</taxon>
        <taxon>Euarchontoglires</taxon>
        <taxon>Glires</taxon>
        <taxon>Rodentia</taxon>
        <taxon>Myomorpha</taxon>
        <taxon>Muroidea</taxon>
        <taxon>Muridae</taxon>
        <taxon>Murinae</taxon>
        <taxon>Mus</taxon>
        <taxon>Mus</taxon>
    </lineage>
</organism>
<accession>Q0VBF8</accession>
<name>STUM_MOUSE</name>
<keyword id="KW-0472">Membrane</keyword>
<keyword id="KW-0597">Phosphoprotein</keyword>
<keyword id="KW-1185">Reference proteome</keyword>
<keyword id="KW-0812">Transmembrane</keyword>
<keyword id="KW-1133">Transmembrane helix</keyword>
<gene>
    <name evidence="2" type="primary">Stum</name>
</gene>
<reference key="1">
    <citation type="journal article" date="2004" name="Genome Res.">
        <title>The status, quality, and expansion of the NIH full-length cDNA project: the Mammalian Gene Collection (MGC).</title>
        <authorList>
            <consortium name="The MGC Project Team"/>
        </authorList>
    </citation>
    <scope>NUCLEOTIDE SEQUENCE [LARGE SCALE MRNA]</scope>
    <source>
        <tissue>Brain</tissue>
    </source>
</reference>
<reference key="2">
    <citation type="journal article" date="2014" name="Science">
        <title>The stum gene is essential for mechanical sensing in proprioceptive neurons.</title>
        <authorList>
            <person name="Desai B.S."/>
            <person name="Chadha A."/>
            <person name="Cook B."/>
        </authorList>
    </citation>
    <scope>IDENTIFICATION</scope>
</reference>
<reference key="3">
    <citation type="journal article" date="2010" name="Cell">
        <title>A tissue-specific atlas of mouse protein phosphorylation and expression.</title>
        <authorList>
            <person name="Huttlin E.L."/>
            <person name="Jedrychowski M.P."/>
            <person name="Elias J.E."/>
            <person name="Goswami T."/>
            <person name="Rad R."/>
            <person name="Beausoleil S.A."/>
            <person name="Villen J."/>
            <person name="Haas W."/>
            <person name="Sowa M.E."/>
            <person name="Gygi S.P."/>
        </authorList>
    </citation>
    <scope>PHOSPHORYLATION [LARGE SCALE ANALYSIS] AT SER-26</scope>
    <scope>IDENTIFICATION BY MASS SPECTROMETRY [LARGE SCALE ANALYSIS]</scope>
    <source>
        <tissue>Brain</tissue>
    </source>
</reference>